<name>EFTU_APPPP</name>
<keyword id="KW-0963">Cytoplasm</keyword>
<keyword id="KW-0251">Elongation factor</keyword>
<keyword id="KW-0342">GTP-binding</keyword>
<keyword id="KW-0378">Hydrolase</keyword>
<keyword id="KW-0460">Magnesium</keyword>
<keyword id="KW-0479">Metal-binding</keyword>
<keyword id="KW-0547">Nucleotide-binding</keyword>
<keyword id="KW-0648">Protein biosynthesis</keyword>
<proteinExistence type="inferred from homology"/>
<gene>
    <name evidence="2" type="primary">tuf</name>
</gene>
<feature type="chain" id="PRO_0000091283" description="Elongation factor Tu">
    <location>
        <begin position="1"/>
        <end position="392"/>
    </location>
</feature>
<feature type="domain" description="tr-type G">
    <location>
        <begin position="10"/>
        <end position="202"/>
    </location>
</feature>
<feature type="region of interest" description="G1" evidence="1">
    <location>
        <begin position="19"/>
        <end position="26"/>
    </location>
</feature>
<feature type="region of interest" description="G2" evidence="1">
    <location>
        <begin position="60"/>
        <end position="64"/>
    </location>
</feature>
<feature type="region of interest" description="G3" evidence="1">
    <location>
        <begin position="81"/>
        <end position="84"/>
    </location>
</feature>
<feature type="region of interest" description="G4" evidence="1">
    <location>
        <begin position="136"/>
        <end position="139"/>
    </location>
</feature>
<feature type="region of interest" description="G5" evidence="1">
    <location>
        <begin position="174"/>
        <end position="176"/>
    </location>
</feature>
<feature type="binding site" evidence="2">
    <location>
        <begin position="19"/>
        <end position="26"/>
    </location>
    <ligand>
        <name>GTP</name>
        <dbReference type="ChEBI" id="CHEBI:37565"/>
    </ligand>
</feature>
<feature type="binding site" evidence="2">
    <location>
        <position position="26"/>
    </location>
    <ligand>
        <name>Mg(2+)</name>
        <dbReference type="ChEBI" id="CHEBI:18420"/>
    </ligand>
</feature>
<feature type="binding site" evidence="2">
    <location>
        <begin position="81"/>
        <end position="85"/>
    </location>
    <ligand>
        <name>GTP</name>
        <dbReference type="ChEBI" id="CHEBI:37565"/>
    </ligand>
</feature>
<feature type="binding site" evidence="2">
    <location>
        <begin position="136"/>
        <end position="139"/>
    </location>
    <ligand>
        <name>GTP</name>
        <dbReference type="ChEBI" id="CHEBI:37565"/>
    </ligand>
</feature>
<protein>
    <recommendedName>
        <fullName evidence="2">Elongation factor Tu</fullName>
        <shortName evidence="2">EF-Tu</shortName>
        <ecNumber evidence="2">3.6.5.3</ecNumber>
    </recommendedName>
</protein>
<reference key="1">
    <citation type="journal article" date="1999" name="Gene">
        <title>Chromosomal organization and nucleotide sequence of the genes coding for the elongation factors G and Tu of the Apple proliferation phytoplasma.</title>
        <authorList>
            <person name="Berg M."/>
            <person name="Seemueller E."/>
        </authorList>
    </citation>
    <scope>NUCLEOTIDE SEQUENCE [GENOMIC DNA]</scope>
    <source>
        <strain>AT</strain>
    </source>
</reference>
<organism>
    <name type="scientific">Apple proliferation phytoplasma</name>
    <dbReference type="NCBI Taxonomy" id="37692"/>
    <lineage>
        <taxon>Bacteria</taxon>
        <taxon>Bacillati</taxon>
        <taxon>Mycoplasmatota</taxon>
        <taxon>Mollicutes</taxon>
        <taxon>Acholeplasmatales</taxon>
        <taxon>Acholeplasmataceae</taxon>
        <taxon>Candidatus Phytoplasma</taxon>
        <taxon>16SrX (Apple proliferation group)</taxon>
    </lineage>
</organism>
<evidence type="ECO:0000250" key="1"/>
<evidence type="ECO:0000255" key="2">
    <source>
        <dbReference type="HAMAP-Rule" id="MF_00118"/>
    </source>
</evidence>
<dbReference type="EC" id="3.6.5.3" evidence="2"/>
<dbReference type="EMBL" id="AJ011104">
    <property type="protein sequence ID" value="CAA09488.1"/>
    <property type="molecule type" value="Genomic_DNA"/>
</dbReference>
<dbReference type="SMR" id="Q9ZEU3"/>
<dbReference type="GO" id="GO:0005737">
    <property type="term" value="C:cytoplasm"/>
    <property type="evidence" value="ECO:0007669"/>
    <property type="project" value="UniProtKB-SubCell"/>
</dbReference>
<dbReference type="GO" id="GO:0005525">
    <property type="term" value="F:GTP binding"/>
    <property type="evidence" value="ECO:0007669"/>
    <property type="project" value="UniProtKB-UniRule"/>
</dbReference>
<dbReference type="GO" id="GO:0003924">
    <property type="term" value="F:GTPase activity"/>
    <property type="evidence" value="ECO:0007669"/>
    <property type="project" value="InterPro"/>
</dbReference>
<dbReference type="GO" id="GO:0003746">
    <property type="term" value="F:translation elongation factor activity"/>
    <property type="evidence" value="ECO:0007669"/>
    <property type="project" value="UniProtKB-UniRule"/>
</dbReference>
<dbReference type="CDD" id="cd01884">
    <property type="entry name" value="EF_Tu"/>
    <property type="match status" value="1"/>
</dbReference>
<dbReference type="CDD" id="cd03697">
    <property type="entry name" value="EFTU_II"/>
    <property type="match status" value="1"/>
</dbReference>
<dbReference type="CDD" id="cd03707">
    <property type="entry name" value="EFTU_III"/>
    <property type="match status" value="1"/>
</dbReference>
<dbReference type="FunFam" id="2.40.30.10:FF:000001">
    <property type="entry name" value="Elongation factor Tu"/>
    <property type="match status" value="1"/>
</dbReference>
<dbReference type="FunFam" id="3.40.50.300:FF:000003">
    <property type="entry name" value="Elongation factor Tu"/>
    <property type="match status" value="1"/>
</dbReference>
<dbReference type="Gene3D" id="3.40.50.300">
    <property type="entry name" value="P-loop containing nucleotide triphosphate hydrolases"/>
    <property type="match status" value="1"/>
</dbReference>
<dbReference type="Gene3D" id="2.40.30.10">
    <property type="entry name" value="Translation factors"/>
    <property type="match status" value="2"/>
</dbReference>
<dbReference type="HAMAP" id="MF_00118_B">
    <property type="entry name" value="EF_Tu_B"/>
    <property type="match status" value="1"/>
</dbReference>
<dbReference type="InterPro" id="IPR041709">
    <property type="entry name" value="EF-Tu_GTP-bd"/>
</dbReference>
<dbReference type="InterPro" id="IPR050055">
    <property type="entry name" value="EF-Tu_GTPase"/>
</dbReference>
<dbReference type="InterPro" id="IPR004161">
    <property type="entry name" value="EFTu-like_2"/>
</dbReference>
<dbReference type="InterPro" id="IPR033720">
    <property type="entry name" value="EFTU_2"/>
</dbReference>
<dbReference type="InterPro" id="IPR031157">
    <property type="entry name" value="G_TR_CS"/>
</dbReference>
<dbReference type="InterPro" id="IPR027417">
    <property type="entry name" value="P-loop_NTPase"/>
</dbReference>
<dbReference type="InterPro" id="IPR005225">
    <property type="entry name" value="Small_GTP-bd"/>
</dbReference>
<dbReference type="InterPro" id="IPR000795">
    <property type="entry name" value="T_Tr_GTP-bd_dom"/>
</dbReference>
<dbReference type="InterPro" id="IPR009000">
    <property type="entry name" value="Transl_B-barrel_sf"/>
</dbReference>
<dbReference type="InterPro" id="IPR009001">
    <property type="entry name" value="Transl_elong_EF1A/Init_IF2_C"/>
</dbReference>
<dbReference type="InterPro" id="IPR004541">
    <property type="entry name" value="Transl_elong_EFTu/EF1A_bac/org"/>
</dbReference>
<dbReference type="InterPro" id="IPR004160">
    <property type="entry name" value="Transl_elong_EFTu/EF1A_C"/>
</dbReference>
<dbReference type="NCBIfam" id="TIGR00485">
    <property type="entry name" value="EF-Tu"/>
    <property type="match status" value="1"/>
</dbReference>
<dbReference type="NCBIfam" id="NF000766">
    <property type="entry name" value="PRK00049.1"/>
    <property type="match status" value="1"/>
</dbReference>
<dbReference type="NCBIfam" id="NF009372">
    <property type="entry name" value="PRK12735.1"/>
    <property type="match status" value="1"/>
</dbReference>
<dbReference type="NCBIfam" id="NF009373">
    <property type="entry name" value="PRK12736.1"/>
    <property type="match status" value="1"/>
</dbReference>
<dbReference type="NCBIfam" id="TIGR00231">
    <property type="entry name" value="small_GTP"/>
    <property type="match status" value="1"/>
</dbReference>
<dbReference type="PANTHER" id="PTHR43721:SF22">
    <property type="entry name" value="ELONGATION FACTOR TU, MITOCHONDRIAL"/>
    <property type="match status" value="1"/>
</dbReference>
<dbReference type="PANTHER" id="PTHR43721">
    <property type="entry name" value="ELONGATION FACTOR TU-RELATED"/>
    <property type="match status" value="1"/>
</dbReference>
<dbReference type="Pfam" id="PF00009">
    <property type="entry name" value="GTP_EFTU"/>
    <property type="match status" value="1"/>
</dbReference>
<dbReference type="Pfam" id="PF03144">
    <property type="entry name" value="GTP_EFTU_D2"/>
    <property type="match status" value="1"/>
</dbReference>
<dbReference type="Pfam" id="PF03143">
    <property type="entry name" value="GTP_EFTU_D3"/>
    <property type="match status" value="1"/>
</dbReference>
<dbReference type="PRINTS" id="PR00315">
    <property type="entry name" value="ELONGATNFCT"/>
</dbReference>
<dbReference type="SUPFAM" id="SSF50465">
    <property type="entry name" value="EF-Tu/eEF-1alpha/eIF2-gamma C-terminal domain"/>
    <property type="match status" value="1"/>
</dbReference>
<dbReference type="SUPFAM" id="SSF52540">
    <property type="entry name" value="P-loop containing nucleoside triphosphate hydrolases"/>
    <property type="match status" value="1"/>
</dbReference>
<dbReference type="SUPFAM" id="SSF50447">
    <property type="entry name" value="Translation proteins"/>
    <property type="match status" value="1"/>
</dbReference>
<dbReference type="PROSITE" id="PS00301">
    <property type="entry name" value="G_TR_1"/>
    <property type="match status" value="1"/>
</dbReference>
<dbReference type="PROSITE" id="PS51722">
    <property type="entry name" value="G_TR_2"/>
    <property type="match status" value="1"/>
</dbReference>
<accession>Q9ZEU3</accession>
<sequence>MSSKVFLRDKVHVNVGTIGHVDHGKTTLTAAITKILSTKGLAENKSYDQIDKTKEEKERGITINTTHVSYETVKRHYAHVDCPGHADYVKNMITGAAQMDAGILVVSAYHGVMPQTREHVLLAGQVGISKLIVFLNKCDLVKEEEWIHLVEMEVRELLNEYKFDGDKTPFVRGSALKALEGTDVEGINKLLEVLDEYIEDPIRDVEKPFLMPVEGVHTITGRGTVATGRVERGKIKISEEVEIIGLKETKKAIITGLEMFKKELDFAQAGDNVGILLRGITRDQIERGQVLAKPGSLNAYHKFLSQVYILTQQEGGRHTAFFSNYRPQFYFRTTDVTGFIKLKKDVKMVLPGDRTELIVELNHPIAIEAGTKFSIREGGRTIGAGTVTEIIE</sequence>
<comment type="function">
    <text evidence="2">GTP hydrolase that promotes the GTP-dependent binding of aminoacyl-tRNA to the A-site of ribosomes during protein biosynthesis.</text>
</comment>
<comment type="catalytic activity">
    <reaction evidence="2">
        <text>GTP + H2O = GDP + phosphate + H(+)</text>
        <dbReference type="Rhea" id="RHEA:19669"/>
        <dbReference type="ChEBI" id="CHEBI:15377"/>
        <dbReference type="ChEBI" id="CHEBI:15378"/>
        <dbReference type="ChEBI" id="CHEBI:37565"/>
        <dbReference type="ChEBI" id="CHEBI:43474"/>
        <dbReference type="ChEBI" id="CHEBI:58189"/>
        <dbReference type="EC" id="3.6.5.3"/>
    </reaction>
    <physiologicalReaction direction="left-to-right" evidence="2">
        <dbReference type="Rhea" id="RHEA:19670"/>
    </physiologicalReaction>
</comment>
<comment type="subunit">
    <text evidence="2">Monomer.</text>
</comment>
<comment type="subcellular location">
    <subcellularLocation>
        <location evidence="2">Cytoplasm</location>
    </subcellularLocation>
</comment>
<comment type="similarity">
    <text evidence="2">Belongs to the TRAFAC class translation factor GTPase superfamily. Classic translation factor GTPase family. EF-Tu/EF-1A subfamily.</text>
</comment>